<keyword id="KW-0067">ATP-binding</keyword>
<keyword id="KW-0963">Cytoplasm</keyword>
<keyword id="KW-0418">Kinase</keyword>
<keyword id="KW-0547">Nucleotide-binding</keyword>
<keyword id="KW-0665">Pyrimidine biosynthesis</keyword>
<keyword id="KW-1185">Reference proteome</keyword>
<keyword id="KW-0808">Transferase</keyword>
<name>PYRH_METMP</name>
<comment type="function">
    <text evidence="1">Catalyzes the reversible phosphorylation of UMP to UDP.</text>
</comment>
<comment type="catalytic activity">
    <reaction evidence="1">
        <text>UMP + ATP = UDP + ADP</text>
        <dbReference type="Rhea" id="RHEA:24400"/>
        <dbReference type="ChEBI" id="CHEBI:30616"/>
        <dbReference type="ChEBI" id="CHEBI:57865"/>
        <dbReference type="ChEBI" id="CHEBI:58223"/>
        <dbReference type="ChEBI" id="CHEBI:456216"/>
        <dbReference type="EC" id="2.7.4.22"/>
    </reaction>
</comment>
<comment type="activity regulation">
    <text evidence="1">Inhibited by UTP.</text>
</comment>
<comment type="pathway">
    <text evidence="1">Pyrimidine metabolism; CTP biosynthesis via de novo pathway; UDP from UMP (UMPK route): step 1/1.</text>
</comment>
<comment type="subunit">
    <text evidence="1">Homohexamer.</text>
</comment>
<comment type="subcellular location">
    <subcellularLocation>
        <location evidence="1">Cytoplasm</location>
    </subcellularLocation>
</comment>
<comment type="similarity">
    <text evidence="1">Belongs to the UMP kinase family.</text>
</comment>
<dbReference type="EC" id="2.7.4.22" evidence="1"/>
<dbReference type="EMBL" id="BX950229">
    <property type="protein sequence ID" value="CAF29941.1"/>
    <property type="molecule type" value="Genomic_DNA"/>
</dbReference>
<dbReference type="RefSeq" id="WP_011170329.1">
    <property type="nucleotide sequence ID" value="NC_005791.1"/>
</dbReference>
<dbReference type="SMR" id="Q6M086"/>
<dbReference type="STRING" id="267377.MMP0385"/>
<dbReference type="EnsemblBacteria" id="CAF29941">
    <property type="protein sequence ID" value="CAF29941"/>
    <property type="gene ID" value="MMP0385"/>
</dbReference>
<dbReference type="GeneID" id="2761849"/>
<dbReference type="KEGG" id="mmp:MMP0385"/>
<dbReference type="PATRIC" id="fig|267377.15.peg.389"/>
<dbReference type="eggNOG" id="arCOG00858">
    <property type="taxonomic scope" value="Archaea"/>
</dbReference>
<dbReference type="HOGENOM" id="CLU_079546_0_0_2"/>
<dbReference type="OrthoDB" id="372251at2157"/>
<dbReference type="UniPathway" id="UPA00159">
    <property type="reaction ID" value="UER00275"/>
</dbReference>
<dbReference type="Proteomes" id="UP000000590">
    <property type="component" value="Chromosome"/>
</dbReference>
<dbReference type="GO" id="GO:0005737">
    <property type="term" value="C:cytoplasm"/>
    <property type="evidence" value="ECO:0007669"/>
    <property type="project" value="UniProtKB-SubCell"/>
</dbReference>
<dbReference type="GO" id="GO:0005524">
    <property type="term" value="F:ATP binding"/>
    <property type="evidence" value="ECO:0007669"/>
    <property type="project" value="UniProtKB-KW"/>
</dbReference>
<dbReference type="GO" id="GO:0033862">
    <property type="term" value="F:UMP kinase activity"/>
    <property type="evidence" value="ECO:0007669"/>
    <property type="project" value="UniProtKB-EC"/>
</dbReference>
<dbReference type="GO" id="GO:0044210">
    <property type="term" value="P:'de novo' CTP biosynthetic process"/>
    <property type="evidence" value="ECO:0007669"/>
    <property type="project" value="UniProtKB-UniRule"/>
</dbReference>
<dbReference type="GO" id="GO:0006225">
    <property type="term" value="P:UDP biosynthetic process"/>
    <property type="evidence" value="ECO:0007669"/>
    <property type="project" value="TreeGrafter"/>
</dbReference>
<dbReference type="CDD" id="cd04253">
    <property type="entry name" value="AAK_UMPK-PyrH-Pf"/>
    <property type="match status" value="1"/>
</dbReference>
<dbReference type="Gene3D" id="3.40.1160.10">
    <property type="entry name" value="Acetylglutamate kinase-like"/>
    <property type="match status" value="1"/>
</dbReference>
<dbReference type="HAMAP" id="MF_01220_A">
    <property type="entry name" value="PyrH_A"/>
    <property type="match status" value="1"/>
</dbReference>
<dbReference type="InterPro" id="IPR036393">
    <property type="entry name" value="AceGlu_kinase-like_sf"/>
</dbReference>
<dbReference type="InterPro" id="IPR001048">
    <property type="entry name" value="Asp/Glu/Uridylate_kinase"/>
</dbReference>
<dbReference type="InterPro" id="IPR011817">
    <property type="entry name" value="Uridylate_kinase"/>
</dbReference>
<dbReference type="InterPro" id="IPR011818">
    <property type="entry name" value="Uridylate_kinase_arch/spir"/>
</dbReference>
<dbReference type="NCBIfam" id="TIGR02076">
    <property type="entry name" value="pyrH_arch"/>
    <property type="match status" value="1"/>
</dbReference>
<dbReference type="PANTHER" id="PTHR42833">
    <property type="entry name" value="URIDYLATE KINASE"/>
    <property type="match status" value="1"/>
</dbReference>
<dbReference type="PANTHER" id="PTHR42833:SF4">
    <property type="entry name" value="URIDYLATE KINASE PUMPKIN, CHLOROPLASTIC"/>
    <property type="match status" value="1"/>
</dbReference>
<dbReference type="Pfam" id="PF00696">
    <property type="entry name" value="AA_kinase"/>
    <property type="match status" value="1"/>
</dbReference>
<dbReference type="PIRSF" id="PIRSF005650">
    <property type="entry name" value="Uridylate_kin"/>
    <property type="match status" value="1"/>
</dbReference>
<dbReference type="SUPFAM" id="SSF53633">
    <property type="entry name" value="Carbamate kinase-like"/>
    <property type="match status" value="1"/>
</dbReference>
<organism>
    <name type="scientific">Methanococcus maripaludis (strain DSM 14266 / JCM 13030 / NBRC 101832 / S2 / LL)</name>
    <dbReference type="NCBI Taxonomy" id="267377"/>
    <lineage>
        <taxon>Archaea</taxon>
        <taxon>Methanobacteriati</taxon>
        <taxon>Methanobacteriota</taxon>
        <taxon>Methanomada group</taxon>
        <taxon>Methanococci</taxon>
        <taxon>Methanococcales</taxon>
        <taxon>Methanococcaceae</taxon>
        <taxon>Methanococcus</taxon>
    </lineage>
</organism>
<feature type="chain" id="PRO_1000053955" description="Uridylate kinase">
    <location>
        <begin position="1"/>
        <end position="225"/>
    </location>
</feature>
<feature type="binding site" evidence="1">
    <location>
        <begin position="9"/>
        <end position="10"/>
    </location>
    <ligand>
        <name>ATP</name>
        <dbReference type="ChEBI" id="CHEBI:30616"/>
    </ligand>
</feature>
<feature type="binding site" evidence="1">
    <location>
        <position position="46"/>
    </location>
    <ligand>
        <name>UMP</name>
        <dbReference type="ChEBI" id="CHEBI:57865"/>
    </ligand>
</feature>
<feature type="binding site" evidence="1">
    <location>
        <position position="47"/>
    </location>
    <ligand>
        <name>ATP</name>
        <dbReference type="ChEBI" id="CHEBI:30616"/>
    </ligand>
</feature>
<feature type="binding site" evidence="1">
    <location>
        <position position="51"/>
    </location>
    <ligand>
        <name>ATP</name>
        <dbReference type="ChEBI" id="CHEBI:30616"/>
    </ligand>
</feature>
<feature type="binding site" evidence="1">
    <location>
        <position position="67"/>
    </location>
    <ligand>
        <name>UMP</name>
        <dbReference type="ChEBI" id="CHEBI:57865"/>
    </ligand>
</feature>
<feature type="binding site" evidence="1">
    <location>
        <begin position="115"/>
        <end position="121"/>
    </location>
    <ligand>
        <name>UMP</name>
        <dbReference type="ChEBI" id="CHEBI:57865"/>
    </ligand>
</feature>
<feature type="binding site" evidence="1">
    <location>
        <position position="141"/>
    </location>
    <ligand>
        <name>ATP</name>
        <dbReference type="ChEBI" id="CHEBI:30616"/>
    </ligand>
</feature>
<feature type="binding site" evidence="1">
    <location>
        <position position="142"/>
    </location>
    <ligand>
        <name>ATP</name>
        <dbReference type="ChEBI" id="CHEBI:30616"/>
    </ligand>
</feature>
<feature type="binding site" evidence="1">
    <location>
        <position position="147"/>
    </location>
    <ligand>
        <name>ATP</name>
        <dbReference type="ChEBI" id="CHEBI:30616"/>
    </ligand>
</feature>
<feature type="binding site" evidence="1">
    <location>
        <position position="150"/>
    </location>
    <ligand>
        <name>ATP</name>
        <dbReference type="ChEBI" id="CHEBI:30616"/>
    </ligand>
</feature>
<sequence length="225" mass="23933">MDVVFALGGSVLMPKEGASTENIQNYAKAFKKLKEMGHRVSVVVGGGNTARQYISVAREFANESFCDEIGILATRMNSMLLISALGKDAVKQVPENFKDAEIILNMDKILVMGGTHPAHTTDAVSATLAEFIDADLLVIATNVDGVYNKDPRCNENAVKLDKINTKELLEITGSSSMSAGSSGVVDPLASKIIDRAKLKTIVVKGIPEEILASVTGNHNGTTITP</sequence>
<accession>Q6M086</accession>
<evidence type="ECO:0000255" key="1">
    <source>
        <dbReference type="HAMAP-Rule" id="MF_01220"/>
    </source>
</evidence>
<gene>
    <name evidence="1" type="primary">pyrH</name>
    <name type="ordered locus">MMP0385</name>
</gene>
<protein>
    <recommendedName>
        <fullName evidence="1">Uridylate kinase</fullName>
        <shortName evidence="1">UK</shortName>
        <ecNumber evidence="1">2.7.4.22</ecNumber>
    </recommendedName>
    <alternativeName>
        <fullName evidence="1">Uridine monophosphate kinase</fullName>
        <shortName evidence="1">UMP kinase</shortName>
        <shortName evidence="1">UMPK</shortName>
    </alternativeName>
</protein>
<reference key="1">
    <citation type="journal article" date="2004" name="J. Bacteriol.">
        <title>Complete genome sequence of the genetically tractable hydrogenotrophic methanogen Methanococcus maripaludis.</title>
        <authorList>
            <person name="Hendrickson E.L."/>
            <person name="Kaul R."/>
            <person name="Zhou Y."/>
            <person name="Bovee D."/>
            <person name="Chapman P."/>
            <person name="Chung J."/>
            <person name="Conway de Macario E."/>
            <person name="Dodsworth J.A."/>
            <person name="Gillett W."/>
            <person name="Graham D.E."/>
            <person name="Hackett M."/>
            <person name="Haydock A.K."/>
            <person name="Kang A."/>
            <person name="Land M.L."/>
            <person name="Levy R."/>
            <person name="Lie T.J."/>
            <person name="Major T.A."/>
            <person name="Moore B.C."/>
            <person name="Porat I."/>
            <person name="Palmeiri A."/>
            <person name="Rouse G."/>
            <person name="Saenphimmachak C."/>
            <person name="Soell D."/>
            <person name="Van Dien S."/>
            <person name="Wang T."/>
            <person name="Whitman W.B."/>
            <person name="Xia Q."/>
            <person name="Zhang Y."/>
            <person name="Larimer F.W."/>
            <person name="Olson M.V."/>
            <person name="Leigh J.A."/>
        </authorList>
    </citation>
    <scope>NUCLEOTIDE SEQUENCE [LARGE SCALE GENOMIC DNA]</scope>
    <source>
        <strain>DSM 14266 / JCM 13030 / NBRC 101832 / S2 / LL</strain>
    </source>
</reference>
<proteinExistence type="inferred from homology"/>